<name>MARHA_RAT</name>
<accession>Q5XIV2</accession>
<reference key="1">
    <citation type="journal article" date="2004" name="Genome Res.">
        <title>The status, quality, and expansion of the NIH full-length cDNA project: the Mammalian Gene Collection (MGC).</title>
        <authorList>
            <consortium name="The MGC Project Team"/>
        </authorList>
    </citation>
    <scope>NUCLEOTIDE SEQUENCE [LARGE SCALE MRNA]</scope>
    <source>
        <tissue>Testis</tissue>
    </source>
</reference>
<reference key="2">
    <citation type="journal article" date="2012" name="Nat. Commun.">
        <title>Quantitative maps of protein phosphorylation sites across 14 different rat organs and tissues.</title>
        <authorList>
            <person name="Lundby A."/>
            <person name="Secher A."/>
            <person name="Lage K."/>
            <person name="Nordsborg N.B."/>
            <person name="Dmytriyev A."/>
            <person name="Lundby C."/>
            <person name="Olsen J.V."/>
        </authorList>
    </citation>
    <scope>PHOSPHORYLATION [LARGE SCALE ANALYSIS] AT SER-78</scope>
    <scope>IDENTIFICATION BY MASS SPECTROMETRY [LARGE SCALE ANALYSIS]</scope>
</reference>
<feature type="chain" id="PRO_0000261627" description="Probable E3 ubiquitin-protein ligase MARCHF10">
    <location>
        <begin position="1"/>
        <end position="790"/>
    </location>
</feature>
<feature type="zinc finger region" description="RING-CH-type" evidence="2">
    <location>
        <begin position="633"/>
        <end position="703"/>
    </location>
</feature>
<feature type="region of interest" description="Disordered" evidence="3">
    <location>
        <begin position="33"/>
        <end position="240"/>
    </location>
</feature>
<feature type="region of interest" description="Disordered" evidence="3">
    <location>
        <begin position="323"/>
        <end position="416"/>
    </location>
</feature>
<feature type="region of interest" description="Disordered" evidence="3">
    <location>
        <begin position="507"/>
        <end position="569"/>
    </location>
</feature>
<feature type="region of interest" description="Disordered" evidence="3">
    <location>
        <begin position="757"/>
        <end position="790"/>
    </location>
</feature>
<feature type="coiled-coil region" evidence="1">
    <location>
        <begin position="284"/>
        <end position="308"/>
    </location>
</feature>
<feature type="compositionally biased region" description="Basic and acidic residues" evidence="3">
    <location>
        <begin position="34"/>
        <end position="48"/>
    </location>
</feature>
<feature type="compositionally biased region" description="Low complexity" evidence="3">
    <location>
        <begin position="61"/>
        <end position="70"/>
    </location>
</feature>
<feature type="compositionally biased region" description="Basic and acidic residues" evidence="3">
    <location>
        <begin position="218"/>
        <end position="227"/>
    </location>
</feature>
<feature type="compositionally biased region" description="Polar residues" evidence="3">
    <location>
        <begin position="230"/>
        <end position="240"/>
    </location>
</feature>
<feature type="compositionally biased region" description="Polar residues" evidence="3">
    <location>
        <begin position="355"/>
        <end position="370"/>
    </location>
</feature>
<feature type="compositionally biased region" description="Polar residues" evidence="3">
    <location>
        <begin position="406"/>
        <end position="416"/>
    </location>
</feature>
<feature type="compositionally biased region" description="Polar residues" evidence="3">
    <location>
        <begin position="511"/>
        <end position="520"/>
    </location>
</feature>
<feature type="compositionally biased region" description="Basic and acidic residues" evidence="3">
    <location>
        <begin position="521"/>
        <end position="533"/>
    </location>
</feature>
<feature type="compositionally biased region" description="Polar residues" evidence="3">
    <location>
        <begin position="534"/>
        <end position="563"/>
    </location>
</feature>
<feature type="compositionally biased region" description="Low complexity" evidence="3">
    <location>
        <begin position="774"/>
        <end position="783"/>
    </location>
</feature>
<feature type="binding site" evidence="2">
    <location>
        <position position="641"/>
    </location>
    <ligand>
        <name>Zn(2+)</name>
        <dbReference type="ChEBI" id="CHEBI:29105"/>
        <label>1</label>
    </ligand>
</feature>
<feature type="binding site" evidence="2">
    <location>
        <position position="644"/>
    </location>
    <ligand>
        <name>Zn(2+)</name>
        <dbReference type="ChEBI" id="CHEBI:29105"/>
        <label>1</label>
    </ligand>
</feature>
<feature type="binding site" evidence="2">
    <location>
        <position position="659"/>
    </location>
    <ligand>
        <name>Zn(2+)</name>
        <dbReference type="ChEBI" id="CHEBI:29105"/>
        <label>2</label>
    </ligand>
</feature>
<feature type="binding site" evidence="2">
    <location>
        <position position="661"/>
    </location>
    <ligand>
        <name>Zn(2+)</name>
        <dbReference type="ChEBI" id="CHEBI:29105"/>
        <label>2</label>
    </ligand>
</feature>
<feature type="binding site" evidence="2">
    <location>
        <position position="669"/>
    </location>
    <ligand>
        <name>Zn(2+)</name>
        <dbReference type="ChEBI" id="CHEBI:29105"/>
        <label>1</label>
    </ligand>
</feature>
<feature type="binding site" evidence="2">
    <location>
        <position position="672"/>
    </location>
    <ligand>
        <name>Zn(2+)</name>
        <dbReference type="ChEBI" id="CHEBI:29105"/>
        <label>1</label>
    </ligand>
</feature>
<feature type="binding site" evidence="2">
    <location>
        <position position="693"/>
    </location>
    <ligand>
        <name>Zn(2+)</name>
        <dbReference type="ChEBI" id="CHEBI:29105"/>
        <label>2</label>
    </ligand>
</feature>
<feature type="binding site" evidence="2">
    <location>
        <position position="696"/>
    </location>
    <ligand>
        <name>Zn(2+)</name>
        <dbReference type="ChEBI" id="CHEBI:29105"/>
        <label>2</label>
    </ligand>
</feature>
<feature type="modified residue" description="Phosphoserine" evidence="5">
    <location>
        <position position="78"/>
    </location>
</feature>
<gene>
    <name type="primary">Marchf10</name>
    <name type="synonym">March10</name>
    <name type="synonym">Rnf190</name>
</gene>
<comment type="function">
    <text evidence="4">E3 ubiquitin-protein ligase (Probable). E3 ubiquitin ligases accept ubiquitin from an E2 ubiquitin-conjugating enzyme in the form of a thioester and then directly transfer the ubiquitin to targeted substrates.</text>
</comment>
<comment type="catalytic activity">
    <reaction>
        <text>S-ubiquitinyl-[E2 ubiquitin-conjugating enzyme]-L-cysteine + [acceptor protein]-L-lysine = [E2 ubiquitin-conjugating enzyme]-L-cysteine + N(6)-ubiquitinyl-[acceptor protein]-L-lysine.</text>
        <dbReference type="EC" id="2.3.2.27"/>
    </reaction>
</comment>
<comment type="pathway">
    <text>Protein modification; protein ubiquitination.</text>
</comment>
<comment type="domain">
    <text evidence="2">The RING-CH-type zinc finger domain is required for E3 ligase activity.</text>
</comment>
<proteinExistence type="evidence at protein level"/>
<dbReference type="EC" id="2.3.2.27"/>
<dbReference type="EMBL" id="BC083567">
    <property type="protein sequence ID" value="AAH83567.1"/>
    <property type="molecule type" value="mRNA"/>
</dbReference>
<dbReference type="RefSeq" id="NP_001013995.1">
    <property type="nucleotide sequence ID" value="NM_001013973.2"/>
</dbReference>
<dbReference type="RefSeq" id="NP_001415686.1">
    <property type="nucleotide sequence ID" value="NM_001428757.1"/>
</dbReference>
<dbReference type="RefSeq" id="XP_017452826.1">
    <property type="nucleotide sequence ID" value="XM_017597337.1"/>
</dbReference>
<dbReference type="RefSeq" id="XP_017452827.1">
    <property type="nucleotide sequence ID" value="XM_017597338.3"/>
</dbReference>
<dbReference type="SMR" id="Q5XIV2"/>
<dbReference type="FunCoup" id="Q5XIV2">
    <property type="interactions" value="102"/>
</dbReference>
<dbReference type="STRING" id="10116.ENSRNOP00000009316"/>
<dbReference type="iPTMnet" id="Q5XIV2"/>
<dbReference type="PhosphoSitePlus" id="Q5XIV2"/>
<dbReference type="PaxDb" id="10116-ENSRNOP00000009316"/>
<dbReference type="Ensembl" id="ENSRNOT00000009316.8">
    <property type="protein sequence ID" value="ENSRNOP00000009316.5"/>
    <property type="gene ID" value="ENSRNOG00000007084.8"/>
</dbReference>
<dbReference type="GeneID" id="303596"/>
<dbReference type="KEGG" id="rno:303596"/>
<dbReference type="UCSC" id="RGD:1311692">
    <property type="organism name" value="rat"/>
</dbReference>
<dbReference type="AGR" id="RGD:1311692"/>
<dbReference type="CTD" id="162333"/>
<dbReference type="RGD" id="1311692">
    <property type="gene designation" value="Marchf10"/>
</dbReference>
<dbReference type="eggNOG" id="KOG1609">
    <property type="taxonomic scope" value="Eukaryota"/>
</dbReference>
<dbReference type="GeneTree" id="ENSGT00530000063836"/>
<dbReference type="HOGENOM" id="CLU_021725_0_0_1"/>
<dbReference type="InParanoid" id="Q5XIV2"/>
<dbReference type="OMA" id="HDYERDW"/>
<dbReference type="OrthoDB" id="264354at2759"/>
<dbReference type="PhylomeDB" id="Q5XIV2"/>
<dbReference type="TreeFam" id="TF330816"/>
<dbReference type="UniPathway" id="UPA00143"/>
<dbReference type="PRO" id="PR:Q5XIV2"/>
<dbReference type="Proteomes" id="UP000002494">
    <property type="component" value="Chromosome 10"/>
</dbReference>
<dbReference type="Bgee" id="ENSRNOG00000007084">
    <property type="expression patterns" value="Expressed in testis and 9 other cell types or tissues"/>
</dbReference>
<dbReference type="ExpressionAtlas" id="Q5XIV2">
    <property type="expression patterns" value="baseline and differential"/>
</dbReference>
<dbReference type="GO" id="GO:0016740">
    <property type="term" value="F:transferase activity"/>
    <property type="evidence" value="ECO:0007669"/>
    <property type="project" value="UniProtKB-KW"/>
</dbReference>
<dbReference type="GO" id="GO:0008270">
    <property type="term" value="F:zinc ion binding"/>
    <property type="evidence" value="ECO:0007669"/>
    <property type="project" value="UniProtKB-KW"/>
</dbReference>
<dbReference type="GO" id="GO:0016567">
    <property type="term" value="P:protein ubiquitination"/>
    <property type="evidence" value="ECO:0007669"/>
    <property type="project" value="UniProtKB-UniPathway"/>
</dbReference>
<dbReference type="Gene3D" id="3.30.40.10">
    <property type="entry name" value="Zinc/RING finger domain, C3HC4 (zinc finger)"/>
    <property type="match status" value="1"/>
</dbReference>
<dbReference type="InterPro" id="IPR052297">
    <property type="entry name" value="RING-CH-type_E3_ubiq-ligase"/>
</dbReference>
<dbReference type="InterPro" id="IPR011016">
    <property type="entry name" value="Znf_RING-CH"/>
</dbReference>
<dbReference type="InterPro" id="IPR013083">
    <property type="entry name" value="Znf_RING/FYVE/PHD"/>
</dbReference>
<dbReference type="PANTHER" id="PTHR14471:SF5">
    <property type="entry name" value="E3 UBIQUITIN-PROTEIN LIGASE MARCHF10-RELATED"/>
    <property type="match status" value="1"/>
</dbReference>
<dbReference type="PANTHER" id="PTHR14471">
    <property type="entry name" value="MARCH7/10 E3 UBIQUITIN PROTEIN LIGASE FAMILY MEMBER"/>
    <property type="match status" value="1"/>
</dbReference>
<dbReference type="Pfam" id="PF12906">
    <property type="entry name" value="RINGv"/>
    <property type="match status" value="1"/>
</dbReference>
<dbReference type="SMART" id="SM00744">
    <property type="entry name" value="RINGv"/>
    <property type="match status" value="1"/>
</dbReference>
<dbReference type="SUPFAM" id="SSF57850">
    <property type="entry name" value="RING/U-box"/>
    <property type="match status" value="1"/>
</dbReference>
<dbReference type="PROSITE" id="PS51292">
    <property type="entry name" value="ZF_RING_CH"/>
    <property type="match status" value="1"/>
</dbReference>
<protein>
    <recommendedName>
        <fullName>Probable E3 ubiquitin-protein ligase MARCHF10</fullName>
        <ecNumber>2.3.2.27</ecNumber>
    </recommendedName>
    <alternativeName>
        <fullName>Membrane-associated RING finger protein 10</fullName>
    </alternativeName>
    <alternativeName>
        <fullName>Membrane-associated RING-CH protein X</fullName>
        <shortName>MARCH-X</shortName>
    </alternativeName>
    <alternativeName>
        <fullName>RING finger protein 190</fullName>
    </alternativeName>
    <alternativeName>
        <fullName evidence="4">RING-type E3 ubiquitin transferase MARCHF10</fullName>
    </alternativeName>
</protein>
<keyword id="KW-0175">Coiled coil</keyword>
<keyword id="KW-0479">Metal-binding</keyword>
<keyword id="KW-0597">Phosphoprotein</keyword>
<keyword id="KW-1185">Reference proteome</keyword>
<keyword id="KW-0808">Transferase</keyword>
<keyword id="KW-0833">Ubl conjugation pathway</keyword>
<keyword id="KW-0862">Zinc</keyword>
<keyword id="KW-0863">Zinc-finger</keyword>
<organism>
    <name type="scientific">Rattus norvegicus</name>
    <name type="common">Rat</name>
    <dbReference type="NCBI Taxonomy" id="10116"/>
    <lineage>
        <taxon>Eukaryota</taxon>
        <taxon>Metazoa</taxon>
        <taxon>Chordata</taxon>
        <taxon>Craniata</taxon>
        <taxon>Vertebrata</taxon>
        <taxon>Euteleostomi</taxon>
        <taxon>Mammalia</taxon>
        <taxon>Eutheria</taxon>
        <taxon>Euarchontoglires</taxon>
        <taxon>Glires</taxon>
        <taxon>Rodentia</taxon>
        <taxon>Myomorpha</taxon>
        <taxon>Muroidea</taxon>
        <taxon>Muridae</taxon>
        <taxon>Murinae</taxon>
        <taxon>Rattus</taxon>
    </lineage>
</organism>
<sequence>MLHEARDRQKFVSDVQYLRDMQHKVDSEYQACLKRQEHKKEPNEKKQEQLWGKDTSDRSRFSSGSSCKQSSGEEDSLSEARLATKAPTAKCEPKLPAIDQTSVKQKHKGTMTLKKPEKVSPSKPSAVAQATKILSRKRRPNLGRLTVSPEMHSPRLSGERSRQKAQLSTKTSGLLGADPVVQQDSLLSANEMKLKRPAREKRNLAPSSQLVRVAGKAPLERQKKGDPSARPQNEPHTALSQTFQPMSGSQVLTESSVPPFLPATVVGPRRAPFRFHDEDFYSALSLNNEQENYDTEEETRTEEELLLAGMRSPPSYKRSRFLGTSAAQNRNVEENAENLRGNSLRRSEPNPGSPRKTSVTEPTTKQSSPGQRMLQDTRLPRELAKDNPSGDQDEKTPVPGDAKSDGVTQVSAEDVSNNCAVEDRSAVHNCERDWQRYLSGSRNSFDCLLSGRPTAPRASVNPSYNAHGSLFHSAVIDDIPASLSVSSILVPSAELEENLRFNVRRPLSPIRNRNPSAASESHSEDTQGEEERASTSQAQESPLLSDLPNPQSSMALGDSPSSPTRRHLQGHFYMPGSLQENIPFTFFAVSDFASQNDNGTSVRVSGVMDEKATEIKADPEKLRKLQESLLEEDSEEEGDLCRICQIAGGSPANPLLEPCGCVGSLQFVHQECLKKWLKVKITSGADLSTVKTCEMCKQGLLVDLDDFNMTEFYHKHQQSRAQSELMNSGLYLVLLLHLYEQRFAELMTLNYRRASRERMSRNYPQPRPEESESSESGDGNESNVYPGRVI</sequence>
<evidence type="ECO:0000255" key="1"/>
<evidence type="ECO:0000255" key="2">
    <source>
        <dbReference type="PROSITE-ProRule" id="PRU00623"/>
    </source>
</evidence>
<evidence type="ECO:0000256" key="3">
    <source>
        <dbReference type="SAM" id="MobiDB-lite"/>
    </source>
</evidence>
<evidence type="ECO:0000305" key="4"/>
<evidence type="ECO:0007744" key="5">
    <source>
    </source>
</evidence>